<feature type="chain" id="PRO_0000297349" description="3-methyl-2-oxobutanoate hydroxymethyltransferase">
    <location>
        <begin position="1"/>
        <end position="273"/>
    </location>
</feature>
<feature type="active site" description="Proton acceptor" evidence="1">
    <location>
        <position position="187"/>
    </location>
</feature>
<feature type="binding site" evidence="1">
    <location>
        <begin position="49"/>
        <end position="50"/>
    </location>
    <ligand>
        <name>3-methyl-2-oxobutanoate</name>
        <dbReference type="ChEBI" id="CHEBI:11851"/>
    </ligand>
</feature>
<feature type="binding site" evidence="1">
    <location>
        <position position="49"/>
    </location>
    <ligand>
        <name>Mg(2+)</name>
        <dbReference type="ChEBI" id="CHEBI:18420"/>
    </ligand>
</feature>
<feature type="binding site" evidence="1">
    <location>
        <position position="88"/>
    </location>
    <ligand>
        <name>3-methyl-2-oxobutanoate</name>
        <dbReference type="ChEBI" id="CHEBI:11851"/>
    </ligand>
</feature>
<feature type="binding site" evidence="1">
    <location>
        <position position="88"/>
    </location>
    <ligand>
        <name>Mg(2+)</name>
        <dbReference type="ChEBI" id="CHEBI:18420"/>
    </ligand>
</feature>
<feature type="binding site" evidence="1">
    <location>
        <position position="118"/>
    </location>
    <ligand>
        <name>3-methyl-2-oxobutanoate</name>
        <dbReference type="ChEBI" id="CHEBI:11851"/>
    </ligand>
</feature>
<feature type="binding site" evidence="1">
    <location>
        <position position="120"/>
    </location>
    <ligand>
        <name>Mg(2+)</name>
        <dbReference type="ChEBI" id="CHEBI:18420"/>
    </ligand>
</feature>
<reference key="1">
    <citation type="journal article" date="2006" name="Proc. Natl. Acad. Sci. U.S.A.">
        <title>The partitioned Rhizobium etli genome: genetic and metabolic redundancy in seven interacting replicons.</title>
        <authorList>
            <person name="Gonzalez V."/>
            <person name="Santamaria R.I."/>
            <person name="Bustos P."/>
            <person name="Hernandez-Gonzalez I."/>
            <person name="Medrano-Soto A."/>
            <person name="Moreno-Hagelsieb G."/>
            <person name="Janga S.C."/>
            <person name="Ramirez M.A."/>
            <person name="Jimenez-Jacinto V."/>
            <person name="Collado-Vides J."/>
            <person name="Davila G."/>
        </authorList>
    </citation>
    <scope>NUCLEOTIDE SEQUENCE [LARGE SCALE GENOMIC DNA]</scope>
    <source>
        <strain>ATCC 51251 / DSM 11541 / JCM 21823 / NBRC 15573 / CFN 42</strain>
    </source>
</reference>
<protein>
    <recommendedName>
        <fullName evidence="1">3-methyl-2-oxobutanoate hydroxymethyltransferase</fullName>
        <ecNumber evidence="1">2.1.2.11</ecNumber>
    </recommendedName>
    <alternativeName>
        <fullName evidence="1">Ketopantoate hydroxymethyltransferase</fullName>
        <shortName evidence="1">KPHMT</shortName>
    </alternativeName>
</protein>
<organism>
    <name type="scientific">Rhizobium etli (strain ATCC 51251 / DSM 11541 / JCM 21823 / NBRC 15573 / CFN 42)</name>
    <dbReference type="NCBI Taxonomy" id="347834"/>
    <lineage>
        <taxon>Bacteria</taxon>
        <taxon>Pseudomonadati</taxon>
        <taxon>Pseudomonadota</taxon>
        <taxon>Alphaproteobacteria</taxon>
        <taxon>Hyphomicrobiales</taxon>
        <taxon>Rhizobiaceae</taxon>
        <taxon>Rhizobium/Agrobacterium group</taxon>
        <taxon>Rhizobium</taxon>
    </lineage>
</organism>
<keyword id="KW-0963">Cytoplasm</keyword>
<keyword id="KW-0460">Magnesium</keyword>
<keyword id="KW-0479">Metal-binding</keyword>
<keyword id="KW-0566">Pantothenate biosynthesis</keyword>
<keyword id="KW-0614">Plasmid</keyword>
<keyword id="KW-1185">Reference proteome</keyword>
<keyword id="KW-0808">Transferase</keyword>
<name>PANB_RHIEC</name>
<sequence>MSAIGSQKRLTPPRISAMKGGKPIVCLTAYTTPMARLLDDHCDLLLVGDSLGMVLYGMETTIGVTLDMMIAHGKAVMRGVAKACVVVDMPFGSYQESKEVAFRNAVRILQETGCDAVKLEGGEEMAETIAFLTKRGIPVMGHIGLMPQQVQTAGGYRSVGHSEHETSKIRRDAHAIGGSGAFAVVIEGTVEPLAREVTSAMHIPTIGIGASAACDGQVLVSDDILGLFNDFKPRFVKRYDELGKRVADAVAAYAEDVRSRKFPAADHTFKRRP</sequence>
<evidence type="ECO:0000255" key="1">
    <source>
        <dbReference type="HAMAP-Rule" id="MF_00156"/>
    </source>
</evidence>
<accession>Q2JZU0</accession>
<comment type="function">
    <text evidence="1">Catalyzes the reversible reaction in which hydroxymethyl group from 5,10-methylenetetrahydrofolate is transferred onto alpha-ketoisovalerate to form ketopantoate.</text>
</comment>
<comment type="catalytic activity">
    <reaction evidence="1">
        <text>3-methyl-2-oxobutanoate + (6R)-5,10-methylene-5,6,7,8-tetrahydrofolate + H2O = 2-dehydropantoate + (6S)-5,6,7,8-tetrahydrofolate</text>
        <dbReference type="Rhea" id="RHEA:11824"/>
        <dbReference type="ChEBI" id="CHEBI:11561"/>
        <dbReference type="ChEBI" id="CHEBI:11851"/>
        <dbReference type="ChEBI" id="CHEBI:15377"/>
        <dbReference type="ChEBI" id="CHEBI:15636"/>
        <dbReference type="ChEBI" id="CHEBI:57453"/>
        <dbReference type="EC" id="2.1.2.11"/>
    </reaction>
</comment>
<comment type="cofactor">
    <cofactor evidence="1">
        <name>Mg(2+)</name>
        <dbReference type="ChEBI" id="CHEBI:18420"/>
    </cofactor>
    <text evidence="1">Binds 1 Mg(2+) ion per subunit.</text>
</comment>
<comment type="pathway">
    <text evidence="1">Cofactor biosynthesis; (R)-pantothenate biosynthesis; (R)-pantoate from 3-methyl-2-oxobutanoate: step 1/2.</text>
</comment>
<comment type="subunit">
    <text evidence="1">Homodecamer; pentamer of dimers.</text>
</comment>
<comment type="subcellular location">
    <subcellularLocation>
        <location evidence="1">Cytoplasm</location>
    </subcellularLocation>
</comment>
<comment type="similarity">
    <text evidence="1">Belongs to the PanB family.</text>
</comment>
<dbReference type="EC" id="2.1.2.11" evidence="1"/>
<dbReference type="EMBL" id="CP000138">
    <property type="protein sequence ID" value="ABC93896.1"/>
    <property type="molecule type" value="Genomic_DNA"/>
</dbReference>
<dbReference type="RefSeq" id="WP_011428314.1">
    <property type="nucleotide sequence ID" value="NC_007766.1"/>
</dbReference>
<dbReference type="SMR" id="Q2JZU0"/>
<dbReference type="KEGG" id="ret:RHE_PF00002"/>
<dbReference type="HOGENOM" id="CLU_036645_1_0_5"/>
<dbReference type="OrthoDB" id="9781789at2"/>
<dbReference type="UniPathway" id="UPA00028">
    <property type="reaction ID" value="UER00003"/>
</dbReference>
<dbReference type="Proteomes" id="UP000001936">
    <property type="component" value="Plasmid p42f"/>
</dbReference>
<dbReference type="GO" id="GO:0005737">
    <property type="term" value="C:cytoplasm"/>
    <property type="evidence" value="ECO:0007669"/>
    <property type="project" value="UniProtKB-SubCell"/>
</dbReference>
<dbReference type="GO" id="GO:0003864">
    <property type="term" value="F:3-methyl-2-oxobutanoate hydroxymethyltransferase activity"/>
    <property type="evidence" value="ECO:0007669"/>
    <property type="project" value="UniProtKB-UniRule"/>
</dbReference>
<dbReference type="GO" id="GO:0000287">
    <property type="term" value="F:magnesium ion binding"/>
    <property type="evidence" value="ECO:0007669"/>
    <property type="project" value="TreeGrafter"/>
</dbReference>
<dbReference type="GO" id="GO:0015940">
    <property type="term" value="P:pantothenate biosynthetic process"/>
    <property type="evidence" value="ECO:0007669"/>
    <property type="project" value="UniProtKB-UniRule"/>
</dbReference>
<dbReference type="CDD" id="cd06557">
    <property type="entry name" value="KPHMT-like"/>
    <property type="match status" value="1"/>
</dbReference>
<dbReference type="FunFam" id="3.20.20.60:FF:000003">
    <property type="entry name" value="3-methyl-2-oxobutanoate hydroxymethyltransferase"/>
    <property type="match status" value="1"/>
</dbReference>
<dbReference type="Gene3D" id="3.20.20.60">
    <property type="entry name" value="Phosphoenolpyruvate-binding domains"/>
    <property type="match status" value="1"/>
</dbReference>
<dbReference type="HAMAP" id="MF_00156">
    <property type="entry name" value="PanB"/>
    <property type="match status" value="1"/>
</dbReference>
<dbReference type="InterPro" id="IPR003700">
    <property type="entry name" value="Pantoate_hydroxy_MeTrfase"/>
</dbReference>
<dbReference type="InterPro" id="IPR015813">
    <property type="entry name" value="Pyrv/PenolPyrv_kinase-like_dom"/>
</dbReference>
<dbReference type="InterPro" id="IPR040442">
    <property type="entry name" value="Pyrv_kinase-like_dom_sf"/>
</dbReference>
<dbReference type="NCBIfam" id="TIGR00222">
    <property type="entry name" value="panB"/>
    <property type="match status" value="1"/>
</dbReference>
<dbReference type="NCBIfam" id="NF001452">
    <property type="entry name" value="PRK00311.1"/>
    <property type="match status" value="1"/>
</dbReference>
<dbReference type="PANTHER" id="PTHR20881">
    <property type="entry name" value="3-METHYL-2-OXOBUTANOATE HYDROXYMETHYLTRANSFERASE"/>
    <property type="match status" value="1"/>
</dbReference>
<dbReference type="PANTHER" id="PTHR20881:SF0">
    <property type="entry name" value="3-METHYL-2-OXOBUTANOATE HYDROXYMETHYLTRANSFERASE"/>
    <property type="match status" value="1"/>
</dbReference>
<dbReference type="Pfam" id="PF02548">
    <property type="entry name" value="Pantoate_transf"/>
    <property type="match status" value="1"/>
</dbReference>
<dbReference type="PIRSF" id="PIRSF000388">
    <property type="entry name" value="Pantoate_hydroxy_MeTrfase"/>
    <property type="match status" value="1"/>
</dbReference>
<dbReference type="SUPFAM" id="SSF51621">
    <property type="entry name" value="Phosphoenolpyruvate/pyruvate domain"/>
    <property type="match status" value="1"/>
</dbReference>
<gene>
    <name evidence="1" type="primary">panB</name>
    <name type="ordered locus">RHE_PF00002</name>
</gene>
<geneLocation type="plasmid">
    <name>p42f</name>
</geneLocation>
<proteinExistence type="inferred from homology"/>